<organism>
    <name type="scientific">Ateles geoffroyi</name>
    <name type="common">Black-handed spider monkey</name>
    <name type="synonym">Geoffroy's spider monkey</name>
    <dbReference type="NCBI Taxonomy" id="9509"/>
    <lineage>
        <taxon>Eukaryota</taxon>
        <taxon>Metazoa</taxon>
        <taxon>Chordata</taxon>
        <taxon>Craniata</taxon>
        <taxon>Vertebrata</taxon>
        <taxon>Euteleostomi</taxon>
        <taxon>Mammalia</taxon>
        <taxon>Eutheria</taxon>
        <taxon>Euarchontoglires</taxon>
        <taxon>Primates</taxon>
        <taxon>Haplorrhini</taxon>
        <taxon>Platyrrhini</taxon>
        <taxon>Atelidae</taxon>
        <taxon>Atelinae</taxon>
        <taxon>Ateles</taxon>
    </lineage>
</organism>
<feature type="signal peptide" evidence="1">
    <location>
        <begin position="1"/>
        <end position="26"/>
    </location>
</feature>
<feature type="chain" id="PRO_0000420976" description="Apolipoprotein C-I">
    <location>
        <begin position="27"/>
        <end position="86"/>
    </location>
</feature>
<feature type="chain" id="PRO_0000420977" description="Truncated apolipoprotein C-I" evidence="4">
    <location>
        <begin position="29"/>
        <end position="86"/>
    </location>
</feature>
<reference key="1">
    <citation type="submission" date="2006-07" db="EMBL/GenBank/DDBJ databases">
        <authorList>
            <person name="Cheng J.-F."/>
            <person name="Hamilton M."/>
            <person name="Peng Y."/>
            <person name="Hosseini R."/>
            <person name="Peng Z."/>
            <person name="Malinov I."/>
            <person name="Rubin E.M."/>
        </authorList>
    </citation>
    <scope>NUCLEOTIDE SEQUENCE [LARGE SCALE GENOMIC DNA]</scope>
</reference>
<reference key="2">
    <citation type="unpublished observations" date="2012-11">
        <authorList>
            <person name="Puppione D.L."/>
        </authorList>
    </citation>
    <scope>IDENTIFICATION</scope>
</reference>
<reference key="3">
    <citation type="journal article" date="2013" name="Front. Biol.">
        <title>Proteogenomic Review of the Changes in Primate apoC-I during Evolution.</title>
        <authorList>
            <person name="Puppione D."/>
            <person name="Whitelegge J.P."/>
        </authorList>
    </citation>
    <scope>REVIEW</scope>
</reference>
<reference key="4">
    <citation type="journal article" date="2014" name="Comp. Biochem. Physiol.">
        <title>Higher primates, but not New World monkeys, have a duplicate set of enhancers flanking their apoC-I genes.</title>
        <authorList>
            <person name="Puppione D.L."/>
        </authorList>
    </citation>
    <scope>GENE DUPLICATION</scope>
</reference>
<protein>
    <recommendedName>
        <fullName>Apolipoprotein C-I</fullName>
        <shortName>Apo-CI</shortName>
        <shortName>ApoC-I</shortName>
    </recommendedName>
    <alternativeName>
        <fullName>Apolipoprotein C1</fullName>
    </alternativeName>
    <component>
        <recommendedName>
            <fullName>Truncated apolipoprotein C-I</fullName>
        </recommendedName>
    </component>
</protein>
<dbReference type="EMBL" id="AC188244">
    <property type="status" value="NOT_ANNOTATED_CDS"/>
    <property type="molecule type" value="Genomic_DNA"/>
</dbReference>
<dbReference type="SMR" id="P0DKV3"/>
<dbReference type="GO" id="GO:0034364">
    <property type="term" value="C:high-density lipoprotein particle"/>
    <property type="evidence" value="ECO:0007669"/>
    <property type="project" value="TreeGrafter"/>
</dbReference>
<dbReference type="GO" id="GO:0034361">
    <property type="term" value="C:very-low-density lipoprotein particle"/>
    <property type="evidence" value="ECO:0007669"/>
    <property type="project" value="UniProtKB-KW"/>
</dbReference>
<dbReference type="GO" id="GO:0005504">
    <property type="term" value="F:fatty acid binding"/>
    <property type="evidence" value="ECO:0007669"/>
    <property type="project" value="TreeGrafter"/>
</dbReference>
<dbReference type="GO" id="GO:0004859">
    <property type="term" value="F:phospholipase inhibitor activity"/>
    <property type="evidence" value="ECO:0007669"/>
    <property type="project" value="TreeGrafter"/>
</dbReference>
<dbReference type="GO" id="GO:0006869">
    <property type="term" value="P:lipid transport"/>
    <property type="evidence" value="ECO:0007669"/>
    <property type="project" value="UniProtKB-KW"/>
</dbReference>
<dbReference type="GO" id="GO:0042157">
    <property type="term" value="P:lipoprotein metabolic process"/>
    <property type="evidence" value="ECO:0007669"/>
    <property type="project" value="InterPro"/>
</dbReference>
<dbReference type="GO" id="GO:0032375">
    <property type="term" value="P:negative regulation of cholesterol transport"/>
    <property type="evidence" value="ECO:0007669"/>
    <property type="project" value="TreeGrafter"/>
</dbReference>
<dbReference type="GO" id="GO:0050995">
    <property type="term" value="P:negative regulation of lipid catabolic process"/>
    <property type="evidence" value="ECO:0007669"/>
    <property type="project" value="TreeGrafter"/>
</dbReference>
<dbReference type="GO" id="GO:0010916">
    <property type="term" value="P:negative regulation of very-low-density lipoprotein particle clearance"/>
    <property type="evidence" value="ECO:0007669"/>
    <property type="project" value="TreeGrafter"/>
</dbReference>
<dbReference type="GO" id="GO:0006641">
    <property type="term" value="P:triglyceride metabolic process"/>
    <property type="evidence" value="ECO:0007669"/>
    <property type="project" value="TreeGrafter"/>
</dbReference>
<dbReference type="GO" id="GO:0034447">
    <property type="term" value="P:very-low-density lipoprotein particle clearance"/>
    <property type="evidence" value="ECO:0007669"/>
    <property type="project" value="TreeGrafter"/>
</dbReference>
<dbReference type="Gene3D" id="4.10.260.30">
    <property type="entry name" value="Apolipoprotein C-I"/>
    <property type="match status" value="1"/>
</dbReference>
<dbReference type="InterPro" id="IPR043081">
    <property type="entry name" value="ApoC-1_sf"/>
</dbReference>
<dbReference type="InterPro" id="IPR006781">
    <property type="entry name" value="ApoC-I"/>
</dbReference>
<dbReference type="PANTHER" id="PTHR16565">
    <property type="entry name" value="APOLIPOPROTEIN C-I"/>
    <property type="match status" value="1"/>
</dbReference>
<dbReference type="PANTHER" id="PTHR16565:SF2">
    <property type="entry name" value="APOLIPOPROTEIN C-I"/>
    <property type="match status" value="1"/>
</dbReference>
<dbReference type="Pfam" id="PF04691">
    <property type="entry name" value="ApoC-I"/>
    <property type="match status" value="1"/>
</dbReference>
<name>APOC1_ATEGE</name>
<accession>P0DKV3</accession>
<gene>
    <name type="primary">APOC1</name>
</gene>
<comment type="function">
    <text evidence="2 3">Inhibitor of lipoprotein binding to the low density lipoprotein (LDL) receptor, LDL receptor-related protein, and very low density lipoprotein (VLDL) receptor. Associates with high density lipoproteins (HDL) and the triacylglycerol-rich lipoproteins in the plasma and makes up about 10% of the protein of the VLDL and 2% of that of HDL. Appears to interfere directly with fatty acid uptake and is also the major plasma inhibitor of cholesteryl ester transfer protein (CETP). Binds free fatty acids and reduces their intracellular esterification. Modulates the interaction of APOE with beta-migrating VLDL and inhibits binding of beta-VLDL to the LDL receptor-related protein.</text>
</comment>
<comment type="subcellular location">
    <subcellularLocation>
        <location evidence="2">Secreted</location>
    </subcellularLocation>
</comment>
<comment type="miscellaneous">
    <text evidence="5">Apolipoprotein C-I is present in acidic (APOC1A) and basic (APOC1B) forms in P.paniscus, P.abelii and P.troglodytes and perhaps also in baboons and macaques. The two genes for ApoC-I arose through a duplication process that occurred after the divergence of New World monkeys from the human lineage. In human, the acidic form has become a pseudogene sometime between the divergence of bonobos and chimpanzees from the human lineage and the appearance of the Denisovans. Pseudogenization resulted when the codon for the penultimate amino acid in the signal sequence was changed to a stop codon.</text>
</comment>
<comment type="similarity">
    <text evidence="6">Belongs to the apolipoprotein C1 family.</text>
</comment>
<proteinExistence type="inferred from homology"/>
<evidence type="ECO:0000250" key="1"/>
<evidence type="ECO:0000250" key="2">
    <source>
        <dbReference type="UniProtKB" id="P02654"/>
    </source>
</evidence>
<evidence type="ECO:0000250" key="3">
    <source>
        <dbReference type="UniProtKB" id="P33047"/>
    </source>
</evidence>
<evidence type="ECO:0000250" key="4">
    <source>
        <dbReference type="UniProtKB" id="P86336"/>
    </source>
</evidence>
<evidence type="ECO:0000303" key="5">
    <source>
    </source>
</evidence>
<evidence type="ECO:0000305" key="6"/>
<sequence>MRLFLSLPVLVVVLLMILEGPGPAQGAPEALDTSSGLDKLKEFGNTLEDKVREFFNRVKESDIPAKTRNWFSETLQKVKEKLRIES</sequence>
<keyword id="KW-0445">Lipid transport</keyword>
<keyword id="KW-0964">Secreted</keyword>
<keyword id="KW-0732">Signal</keyword>
<keyword id="KW-0813">Transport</keyword>
<keyword id="KW-0850">VLDL</keyword>